<sequence length="229" mass="24587">MKRKNIALIPAAGIGARFGADKPKQYVEIGSKTVLEHTIGIFERHEAVDLTVVVVSPEDTFADKVQTAFPQVRVWKNGGQTRAETVRNGVAKLLEIGLASADDNILVHDAARCCLPSEALTRLIEQAGNAAEGGILAISIADTLKRAEGGQISATVERTSLWQAQTPQLFRAGLLHRALAAENLDGITDEASAVEKLGIRPLLVQGDARNLKLTQPQDAYIVRLLLNAV</sequence>
<gene>
    <name evidence="1" type="primary">ispD</name>
    <name type="ordered locus">NMCC_1418</name>
</gene>
<reference key="1">
    <citation type="journal article" date="2008" name="Genomics">
        <title>Characterization of ST-4821 complex, a unique Neisseria meningitidis clone.</title>
        <authorList>
            <person name="Peng J."/>
            <person name="Yang L."/>
            <person name="Yang F."/>
            <person name="Yang J."/>
            <person name="Yan Y."/>
            <person name="Nie H."/>
            <person name="Zhang X."/>
            <person name="Xiong Z."/>
            <person name="Jiang Y."/>
            <person name="Cheng F."/>
            <person name="Xu X."/>
            <person name="Chen S."/>
            <person name="Sun L."/>
            <person name="Li W."/>
            <person name="Shen Y."/>
            <person name="Shao Z."/>
            <person name="Liang X."/>
            <person name="Xu J."/>
            <person name="Jin Q."/>
        </authorList>
    </citation>
    <scope>NUCLEOTIDE SEQUENCE [LARGE SCALE GENOMIC DNA]</scope>
    <source>
        <strain>053442</strain>
    </source>
</reference>
<organism>
    <name type="scientific">Neisseria meningitidis serogroup C (strain 053442)</name>
    <dbReference type="NCBI Taxonomy" id="374833"/>
    <lineage>
        <taxon>Bacteria</taxon>
        <taxon>Pseudomonadati</taxon>
        <taxon>Pseudomonadota</taxon>
        <taxon>Betaproteobacteria</taxon>
        <taxon>Neisseriales</taxon>
        <taxon>Neisseriaceae</taxon>
        <taxon>Neisseria</taxon>
    </lineage>
</organism>
<dbReference type="EC" id="2.7.7.60" evidence="1"/>
<dbReference type="EMBL" id="CP000381">
    <property type="protein sequence ID" value="ABX74246.1"/>
    <property type="molecule type" value="Genomic_DNA"/>
</dbReference>
<dbReference type="RefSeq" id="WP_002219027.1">
    <property type="nucleotide sequence ID" value="NC_010120.1"/>
</dbReference>
<dbReference type="SMR" id="A9M0U7"/>
<dbReference type="KEGG" id="nmn:NMCC_1418"/>
<dbReference type="HOGENOM" id="CLU_061281_3_0_4"/>
<dbReference type="UniPathway" id="UPA00056">
    <property type="reaction ID" value="UER00093"/>
</dbReference>
<dbReference type="Proteomes" id="UP000001177">
    <property type="component" value="Chromosome"/>
</dbReference>
<dbReference type="GO" id="GO:0050518">
    <property type="term" value="F:2-C-methyl-D-erythritol 4-phosphate cytidylyltransferase activity"/>
    <property type="evidence" value="ECO:0007669"/>
    <property type="project" value="UniProtKB-UniRule"/>
</dbReference>
<dbReference type="GO" id="GO:0019288">
    <property type="term" value="P:isopentenyl diphosphate biosynthetic process, methylerythritol 4-phosphate pathway"/>
    <property type="evidence" value="ECO:0007669"/>
    <property type="project" value="UniProtKB-UniRule"/>
</dbReference>
<dbReference type="CDD" id="cd02516">
    <property type="entry name" value="CDP-ME_synthetase"/>
    <property type="match status" value="1"/>
</dbReference>
<dbReference type="FunFam" id="3.90.550.10:FF:000003">
    <property type="entry name" value="2-C-methyl-D-erythritol 4-phosphate cytidylyltransferase"/>
    <property type="match status" value="1"/>
</dbReference>
<dbReference type="Gene3D" id="3.90.550.10">
    <property type="entry name" value="Spore Coat Polysaccharide Biosynthesis Protein SpsA, Chain A"/>
    <property type="match status" value="1"/>
</dbReference>
<dbReference type="HAMAP" id="MF_00108">
    <property type="entry name" value="IspD"/>
    <property type="match status" value="1"/>
</dbReference>
<dbReference type="InterPro" id="IPR001228">
    <property type="entry name" value="IspD"/>
</dbReference>
<dbReference type="InterPro" id="IPR034683">
    <property type="entry name" value="IspD/TarI"/>
</dbReference>
<dbReference type="InterPro" id="IPR050088">
    <property type="entry name" value="IspD/TarI_cytidylyltransf_bact"/>
</dbReference>
<dbReference type="InterPro" id="IPR018294">
    <property type="entry name" value="ISPD_synthase_CS"/>
</dbReference>
<dbReference type="InterPro" id="IPR029044">
    <property type="entry name" value="Nucleotide-diphossugar_trans"/>
</dbReference>
<dbReference type="NCBIfam" id="TIGR00453">
    <property type="entry name" value="ispD"/>
    <property type="match status" value="1"/>
</dbReference>
<dbReference type="PANTHER" id="PTHR32125">
    <property type="entry name" value="2-C-METHYL-D-ERYTHRITOL 4-PHOSPHATE CYTIDYLYLTRANSFERASE, CHLOROPLASTIC"/>
    <property type="match status" value="1"/>
</dbReference>
<dbReference type="PANTHER" id="PTHR32125:SF4">
    <property type="entry name" value="2-C-METHYL-D-ERYTHRITOL 4-PHOSPHATE CYTIDYLYLTRANSFERASE, CHLOROPLASTIC"/>
    <property type="match status" value="1"/>
</dbReference>
<dbReference type="Pfam" id="PF01128">
    <property type="entry name" value="IspD"/>
    <property type="match status" value="1"/>
</dbReference>
<dbReference type="SUPFAM" id="SSF53448">
    <property type="entry name" value="Nucleotide-diphospho-sugar transferases"/>
    <property type="match status" value="1"/>
</dbReference>
<dbReference type="PROSITE" id="PS01295">
    <property type="entry name" value="ISPD"/>
    <property type="match status" value="1"/>
</dbReference>
<name>ISPD_NEIM0</name>
<accession>A9M0U7</accession>
<evidence type="ECO:0000255" key="1">
    <source>
        <dbReference type="HAMAP-Rule" id="MF_00108"/>
    </source>
</evidence>
<feature type="chain" id="PRO_1000075936" description="2-C-methyl-D-erythritol 4-phosphate cytidylyltransferase">
    <location>
        <begin position="1"/>
        <end position="229"/>
    </location>
</feature>
<feature type="site" description="Transition state stabilizer" evidence="1">
    <location>
        <position position="17"/>
    </location>
</feature>
<feature type="site" description="Transition state stabilizer" evidence="1">
    <location>
        <position position="24"/>
    </location>
</feature>
<feature type="site" description="Positions MEP for the nucleophilic attack" evidence="1">
    <location>
        <position position="158"/>
    </location>
</feature>
<feature type="site" description="Positions MEP for the nucleophilic attack" evidence="1">
    <location>
        <position position="212"/>
    </location>
</feature>
<protein>
    <recommendedName>
        <fullName evidence="1">2-C-methyl-D-erythritol 4-phosphate cytidylyltransferase</fullName>
        <ecNumber evidence="1">2.7.7.60</ecNumber>
    </recommendedName>
    <alternativeName>
        <fullName evidence="1">4-diphosphocytidyl-2C-methyl-D-erythritol synthase</fullName>
    </alternativeName>
    <alternativeName>
        <fullName evidence="1">MEP cytidylyltransferase</fullName>
        <shortName evidence="1">MCT</shortName>
    </alternativeName>
</protein>
<comment type="function">
    <text evidence="1">Catalyzes the formation of 4-diphosphocytidyl-2-C-methyl-D-erythritol from CTP and 2-C-methyl-D-erythritol 4-phosphate (MEP).</text>
</comment>
<comment type="catalytic activity">
    <reaction evidence="1">
        <text>2-C-methyl-D-erythritol 4-phosphate + CTP + H(+) = 4-CDP-2-C-methyl-D-erythritol + diphosphate</text>
        <dbReference type="Rhea" id="RHEA:13429"/>
        <dbReference type="ChEBI" id="CHEBI:15378"/>
        <dbReference type="ChEBI" id="CHEBI:33019"/>
        <dbReference type="ChEBI" id="CHEBI:37563"/>
        <dbReference type="ChEBI" id="CHEBI:57823"/>
        <dbReference type="ChEBI" id="CHEBI:58262"/>
        <dbReference type="EC" id="2.7.7.60"/>
    </reaction>
</comment>
<comment type="pathway">
    <text evidence="1">Isoprenoid biosynthesis; isopentenyl diphosphate biosynthesis via DXP pathway; isopentenyl diphosphate from 1-deoxy-D-xylulose 5-phosphate: step 2/6.</text>
</comment>
<comment type="similarity">
    <text evidence="1">Belongs to the IspD/TarI cytidylyltransferase family. IspD subfamily.</text>
</comment>
<keyword id="KW-0414">Isoprene biosynthesis</keyword>
<keyword id="KW-0548">Nucleotidyltransferase</keyword>
<keyword id="KW-0808">Transferase</keyword>
<proteinExistence type="inferred from homology"/>